<comment type="function">
    <text evidence="6 10 13">Acts as a transcriptional activator that promotes transcription of muscle-specific target genes and plays a role in muscle differentiation (PubMed:16901893). Together with MYF5 and MYOG, co-occupies muscle-specific gene promoter core region during myogenesis. Induces fibroblasts to differentiate into myoblasts. Interacts with and is inhibited by the twist protein. This interaction probably involves the basic domains of both proteins (PubMed:21798092, PubMed:3175662).</text>
</comment>
<comment type="subunit">
    <text evidence="2 5 7 8 9 11 12">Interacts with SUV39H1 (By similarity). Efficient DNA binding requires dimerization with another bHLH protein. Seems to form active heterodimers with ITF-2. Interacts with DDX5. Interacts with CHD2. Interacts with TSC22D3 isoform 1 and isoform 4. Interacts with SETD3 (PubMed:21832073). Interacts with P-TEFB complex; promotes the transcriptional activity of MYOD1 through its CDK9-mediated phosphorylation (PubMed:12037670). Interacts with CSRP3 (By similarity). Interacts with NUPR1 (PubMed:19723804).</text>
</comment>
<comment type="interaction">
    <interactant intactId="EBI-4405734">
        <id>P10085</id>
    </interactant>
    <interactant intactId="EBI-15626132">
        <id>Q8VIM5-1</id>
        <label>Myocd</label>
    </interactant>
    <organismsDiffer>false</organismsDiffer>
    <experiments>2</experiments>
</comment>
<comment type="interaction">
    <interactant intactId="EBI-4405734">
        <id>P10085</id>
    </interactant>
    <interactant intactId="EBI-7525857">
        <id>Q6P9Z1</id>
        <label>Smarcd3</label>
    </interactant>
    <organismsDiffer>false</organismsDiffer>
    <experiments>6</experiments>
</comment>
<comment type="interaction">
    <interactant intactId="EBI-4405734">
        <id>P10085</id>
    </interactant>
    <interactant intactId="EBI-302230">
        <id>O54864</id>
        <label>Suv39h1</label>
    </interactant>
    <organismsDiffer>false</organismsDiffer>
    <experiments>3</experiments>
</comment>
<comment type="interaction">
    <interactant intactId="EBI-4405734">
        <id>P10085</id>
    </interactant>
    <interactant intactId="EBI-12502290">
        <id>P50463</id>
        <label>Csrp3</label>
    </interactant>
    <organismsDiffer>true</organismsDiffer>
    <experiments>3</experiments>
</comment>
<comment type="interaction">
    <interactant intactId="EBI-4405734">
        <id>P10085</id>
    </interactant>
    <interactant intactId="EBI-351962">
        <id>P17844</id>
        <label>DDX5</label>
    </interactant>
    <organismsDiffer>true</organismsDiffer>
    <experiments>3</experiments>
</comment>
<comment type="interaction">
    <interactant intactId="EBI-4405734">
        <id>P10085</id>
    </interactant>
    <interactant intactId="EBI-399080">
        <id>Q92993</id>
        <label>KAT5</label>
    </interactant>
    <organismsDiffer>true</organismsDiffer>
    <experiments>5</experiments>
</comment>
<comment type="interaction">
    <interactant intactId="EBI-4405734">
        <id>P10085</id>
    </interactant>
    <interactant intactId="EBI-2656305">
        <id>Q02078</id>
        <label>MEF2A</label>
    </interactant>
    <organismsDiffer>true</organismsDiffer>
    <experiments>2</experiments>
</comment>
<comment type="subcellular location">
    <subcellularLocation>
        <location evidence="6">Nucleus</location>
    </subcellularLocation>
</comment>
<comment type="PTM">
    <text evidence="14">Acetylated by a complex containing EP300 and PCAF. The acetylation is essential to activate target genes. Conversely, its deacetylation by SIRT1 inhibits its function.</text>
</comment>
<comment type="PTM">
    <text evidence="1">Ubiquitinated on the N-terminus; which is required for proteasomal degradation.</text>
</comment>
<comment type="PTM">
    <text evidence="1">Phosphorylated by CDK9. This phosphorylation promotes its function in muscle differentiation (By similarity).</text>
</comment>
<comment type="PTM">
    <text evidence="1">Methylation at Lys-104 by EHMT2/G9a inhibits myogenic activity.</text>
</comment>
<name>MYOD1_MOUSE</name>
<accession>P10085</accession>
<accession>Q8C6B1</accession>
<gene>
    <name type="primary">Myod1</name>
    <name type="synonym">Myod</name>
</gene>
<evidence type="ECO:0000250" key="1"/>
<evidence type="ECO:0000250" key="2">
    <source>
        <dbReference type="UniProtKB" id="P15172"/>
    </source>
</evidence>
<evidence type="ECO:0000255" key="3">
    <source>
        <dbReference type="PROSITE-ProRule" id="PRU00981"/>
    </source>
</evidence>
<evidence type="ECO:0000256" key="4">
    <source>
        <dbReference type="SAM" id="MobiDB-lite"/>
    </source>
</evidence>
<evidence type="ECO:0000269" key="5">
    <source>
    </source>
</evidence>
<evidence type="ECO:0000269" key="6">
    <source>
    </source>
</evidence>
<evidence type="ECO:0000269" key="7">
    <source>
    </source>
</evidence>
<evidence type="ECO:0000269" key="8">
    <source>
    </source>
</evidence>
<evidence type="ECO:0000269" key="9">
    <source>
    </source>
</evidence>
<evidence type="ECO:0000269" key="10">
    <source>
    </source>
</evidence>
<evidence type="ECO:0000269" key="11">
    <source>
    </source>
</evidence>
<evidence type="ECO:0000269" key="12">
    <source>
    </source>
</evidence>
<evidence type="ECO:0000269" key="13">
    <source>
    </source>
</evidence>
<evidence type="ECO:0000269" key="14">
    <source>
    </source>
</evidence>
<evidence type="ECO:0000305" key="15"/>
<evidence type="ECO:0007829" key="16">
    <source>
        <dbReference type="PDB" id="1MDY"/>
    </source>
</evidence>
<evidence type="ECO:0007829" key="17">
    <source>
        <dbReference type="PDB" id="7WZ6"/>
    </source>
</evidence>
<proteinExistence type="evidence at protein level"/>
<protein>
    <recommendedName>
        <fullName>Myoblast determination protein 1</fullName>
    </recommendedName>
</protein>
<feature type="chain" id="PRO_0000127361" description="Myoblast determination protein 1">
    <location>
        <begin position="1"/>
        <end position="318"/>
    </location>
</feature>
<feature type="domain" description="bHLH" evidence="3">
    <location>
        <begin position="109"/>
        <end position="160"/>
    </location>
</feature>
<feature type="region of interest" description="Disordered" evidence="4">
    <location>
        <begin position="175"/>
        <end position="225"/>
    </location>
</feature>
<feature type="region of interest" description="Disordered" evidence="4">
    <location>
        <begin position="265"/>
        <end position="318"/>
    </location>
</feature>
<feature type="compositionally biased region" description="Polar residues" evidence="4">
    <location>
        <begin position="196"/>
        <end position="206"/>
    </location>
</feature>
<feature type="compositionally biased region" description="Low complexity" evidence="4">
    <location>
        <begin position="265"/>
        <end position="274"/>
    </location>
</feature>
<feature type="compositionally biased region" description="Polar residues" evidence="4">
    <location>
        <begin position="287"/>
        <end position="298"/>
    </location>
</feature>
<feature type="compositionally biased region" description="Polar residues" evidence="4">
    <location>
        <begin position="307"/>
        <end position="318"/>
    </location>
</feature>
<feature type="modified residue" description="N6-methyllysine; by EHMT2" evidence="2">
    <location>
        <position position="104"/>
    </location>
</feature>
<feature type="cross-link" description="Peptide (Met-Gly) (interchain with G-Cter in ubiquitin)" evidence="1">
    <location>
        <position position="1"/>
    </location>
</feature>
<feature type="sequence conflict" description="In Ref. 1; AAA39799, 2; CAA43836 and 3; AAA39798." evidence="15" ref="1 2 3">
    <original>M</original>
    <variation>V</variation>
    <location>
        <position position="53"/>
    </location>
</feature>
<feature type="sequence conflict" description="In Ref. 1; AAA39799, 2; CAA43836 and 3; AAA39798." evidence="15" ref="1 2 3">
    <original>P</original>
    <variation>S</variation>
    <location>
        <position position="66"/>
    </location>
</feature>
<feature type="sequence conflict" description="In Ref. 1; AAA39799, 2; CAA43836 and 3; AAA39798." evidence="15" ref="1 2 3">
    <original>A</original>
    <variation>V</variation>
    <location>
        <position position="234"/>
    </location>
</feature>
<feature type="helix" evidence="16">
    <location>
        <begin position="106"/>
        <end position="108"/>
    </location>
</feature>
<feature type="helix" evidence="17">
    <location>
        <begin position="118"/>
        <end position="136"/>
    </location>
</feature>
<feature type="helix" evidence="17">
    <location>
        <begin position="146"/>
        <end position="163"/>
    </location>
</feature>
<sequence>MELLSPPLRDIDLTGPDGSLCSFETADDFYDDPCFDSPDLRFFEDLDPRLVHMGALLKPEEHAHFPTAVHPGPGAREDEHVRAPSGHHQAGRCLLWACKACKRKTTNADRRKAATMRERRRLSKVNEAFETLKRCTSSNPNQRLPKVEILRNAIRYIEGLQALLRDQDAAPPGAAAFYAPGPLPPGRGSEHYSGDSDASSPRSNCSDGMMDYSGPPSGPRRQNGYDTAYYSEAARESRPGKSAAVSSLDCLSSIVERISTDSPAAPALLLADAPPESPPGPPEGASLSDTEQGTQTPSPDAAPQCPAGSNPNAIYQVL</sequence>
<keyword id="KW-0002">3D-structure</keyword>
<keyword id="KW-0007">Acetylation</keyword>
<keyword id="KW-0010">Activator</keyword>
<keyword id="KW-0217">Developmental protein</keyword>
<keyword id="KW-0221">Differentiation</keyword>
<keyword id="KW-0238">DNA-binding</keyword>
<keyword id="KW-0488">Methylation</keyword>
<keyword id="KW-0517">Myogenesis</keyword>
<keyword id="KW-0539">Nucleus</keyword>
<keyword id="KW-0597">Phosphoprotein</keyword>
<keyword id="KW-1185">Reference proteome</keyword>
<keyword id="KW-0804">Transcription</keyword>
<keyword id="KW-0805">Transcription regulation</keyword>
<keyword id="KW-0832">Ubl conjugation</keyword>
<reference key="1">
    <citation type="journal article" date="1987" name="Cell">
        <title>Expression of a single transfected cDNA converts fibroblasts to myoblasts.</title>
        <authorList>
            <person name="Davis R.L."/>
            <person name="Weintraub H."/>
            <person name="Lassar A.B."/>
        </authorList>
    </citation>
    <scope>NUCLEOTIDE SEQUENCE [MRNA]</scope>
</reference>
<reference key="2">
    <citation type="journal article" date="1991" name="Nucleic Acids Res.">
        <title>Characterisation of a genomic clone covering the structural mouse MyoD1 gene and its promoter region.</title>
        <authorList>
            <person name="Zingg J.-M."/>
            <person name="Alva G.P."/>
            <person name="Jost J.-P."/>
        </authorList>
    </citation>
    <scope>NUCLEOTIDE SEQUENCE [GENOMIC DNA]</scope>
</reference>
<reference key="3">
    <citation type="journal article" date="1988" name="Cell">
        <title>Myogenic lineage determination and differentiation: evidence for a regulatory gene pathway.</title>
        <authorList>
            <person name="Pinney D.F."/>
            <person name="Pearson-White S.H."/>
            <person name="Konieczny S.F."/>
            <person name="Latham K.E."/>
            <person name="Emerson C.P. Jr."/>
        </authorList>
    </citation>
    <scope>NUCLEOTIDE SEQUENCE [MRNA]</scope>
</reference>
<reference key="4">
    <citation type="journal article" date="2005" name="Science">
        <title>The transcriptional landscape of the mammalian genome.</title>
        <authorList>
            <person name="Carninci P."/>
            <person name="Kasukawa T."/>
            <person name="Katayama S."/>
            <person name="Gough J."/>
            <person name="Frith M.C."/>
            <person name="Maeda N."/>
            <person name="Oyama R."/>
            <person name="Ravasi T."/>
            <person name="Lenhard B."/>
            <person name="Wells C."/>
            <person name="Kodzius R."/>
            <person name="Shimokawa K."/>
            <person name="Bajic V.B."/>
            <person name="Brenner S.E."/>
            <person name="Batalov S."/>
            <person name="Forrest A.R."/>
            <person name="Zavolan M."/>
            <person name="Davis M.J."/>
            <person name="Wilming L.G."/>
            <person name="Aidinis V."/>
            <person name="Allen J.E."/>
            <person name="Ambesi-Impiombato A."/>
            <person name="Apweiler R."/>
            <person name="Aturaliya R.N."/>
            <person name="Bailey T.L."/>
            <person name="Bansal M."/>
            <person name="Baxter L."/>
            <person name="Beisel K.W."/>
            <person name="Bersano T."/>
            <person name="Bono H."/>
            <person name="Chalk A.M."/>
            <person name="Chiu K.P."/>
            <person name="Choudhary V."/>
            <person name="Christoffels A."/>
            <person name="Clutterbuck D.R."/>
            <person name="Crowe M.L."/>
            <person name="Dalla E."/>
            <person name="Dalrymple B.P."/>
            <person name="de Bono B."/>
            <person name="Della Gatta G."/>
            <person name="di Bernardo D."/>
            <person name="Down T."/>
            <person name="Engstrom P."/>
            <person name="Fagiolini M."/>
            <person name="Faulkner G."/>
            <person name="Fletcher C.F."/>
            <person name="Fukushima T."/>
            <person name="Furuno M."/>
            <person name="Futaki S."/>
            <person name="Gariboldi M."/>
            <person name="Georgii-Hemming P."/>
            <person name="Gingeras T.R."/>
            <person name="Gojobori T."/>
            <person name="Green R.E."/>
            <person name="Gustincich S."/>
            <person name="Harbers M."/>
            <person name="Hayashi Y."/>
            <person name="Hensch T.K."/>
            <person name="Hirokawa N."/>
            <person name="Hill D."/>
            <person name="Huminiecki L."/>
            <person name="Iacono M."/>
            <person name="Ikeo K."/>
            <person name="Iwama A."/>
            <person name="Ishikawa T."/>
            <person name="Jakt M."/>
            <person name="Kanapin A."/>
            <person name="Katoh M."/>
            <person name="Kawasawa Y."/>
            <person name="Kelso J."/>
            <person name="Kitamura H."/>
            <person name="Kitano H."/>
            <person name="Kollias G."/>
            <person name="Krishnan S.P."/>
            <person name="Kruger A."/>
            <person name="Kummerfeld S.K."/>
            <person name="Kurochkin I.V."/>
            <person name="Lareau L.F."/>
            <person name="Lazarevic D."/>
            <person name="Lipovich L."/>
            <person name="Liu J."/>
            <person name="Liuni S."/>
            <person name="McWilliam S."/>
            <person name="Madan Babu M."/>
            <person name="Madera M."/>
            <person name="Marchionni L."/>
            <person name="Matsuda H."/>
            <person name="Matsuzawa S."/>
            <person name="Miki H."/>
            <person name="Mignone F."/>
            <person name="Miyake S."/>
            <person name="Morris K."/>
            <person name="Mottagui-Tabar S."/>
            <person name="Mulder N."/>
            <person name="Nakano N."/>
            <person name="Nakauchi H."/>
            <person name="Ng P."/>
            <person name="Nilsson R."/>
            <person name="Nishiguchi S."/>
            <person name="Nishikawa S."/>
            <person name="Nori F."/>
            <person name="Ohara O."/>
            <person name="Okazaki Y."/>
            <person name="Orlando V."/>
            <person name="Pang K.C."/>
            <person name="Pavan W.J."/>
            <person name="Pavesi G."/>
            <person name="Pesole G."/>
            <person name="Petrovsky N."/>
            <person name="Piazza S."/>
            <person name="Reed J."/>
            <person name="Reid J.F."/>
            <person name="Ring B.Z."/>
            <person name="Ringwald M."/>
            <person name="Rost B."/>
            <person name="Ruan Y."/>
            <person name="Salzberg S.L."/>
            <person name="Sandelin A."/>
            <person name="Schneider C."/>
            <person name="Schoenbach C."/>
            <person name="Sekiguchi K."/>
            <person name="Semple C.A."/>
            <person name="Seno S."/>
            <person name="Sessa L."/>
            <person name="Sheng Y."/>
            <person name="Shibata Y."/>
            <person name="Shimada H."/>
            <person name="Shimada K."/>
            <person name="Silva D."/>
            <person name="Sinclair B."/>
            <person name="Sperling S."/>
            <person name="Stupka E."/>
            <person name="Sugiura K."/>
            <person name="Sultana R."/>
            <person name="Takenaka Y."/>
            <person name="Taki K."/>
            <person name="Tammoja K."/>
            <person name="Tan S.L."/>
            <person name="Tang S."/>
            <person name="Taylor M.S."/>
            <person name="Tegner J."/>
            <person name="Teichmann S.A."/>
            <person name="Ueda H.R."/>
            <person name="van Nimwegen E."/>
            <person name="Verardo R."/>
            <person name="Wei C.L."/>
            <person name="Yagi K."/>
            <person name="Yamanishi H."/>
            <person name="Zabarovsky E."/>
            <person name="Zhu S."/>
            <person name="Zimmer A."/>
            <person name="Hide W."/>
            <person name="Bult C."/>
            <person name="Grimmond S.M."/>
            <person name="Teasdale R.D."/>
            <person name="Liu E.T."/>
            <person name="Brusic V."/>
            <person name="Quackenbush J."/>
            <person name="Wahlestedt C."/>
            <person name="Mattick J.S."/>
            <person name="Hume D.A."/>
            <person name="Kai C."/>
            <person name="Sasaki D."/>
            <person name="Tomaru Y."/>
            <person name="Fukuda S."/>
            <person name="Kanamori-Katayama M."/>
            <person name="Suzuki M."/>
            <person name="Aoki J."/>
            <person name="Arakawa T."/>
            <person name="Iida J."/>
            <person name="Imamura K."/>
            <person name="Itoh M."/>
            <person name="Kato T."/>
            <person name="Kawaji H."/>
            <person name="Kawagashira N."/>
            <person name="Kawashima T."/>
            <person name="Kojima M."/>
            <person name="Kondo S."/>
            <person name="Konno H."/>
            <person name="Nakano K."/>
            <person name="Ninomiya N."/>
            <person name="Nishio T."/>
            <person name="Okada M."/>
            <person name="Plessy C."/>
            <person name="Shibata K."/>
            <person name="Shiraki T."/>
            <person name="Suzuki S."/>
            <person name="Tagami M."/>
            <person name="Waki K."/>
            <person name="Watahiki A."/>
            <person name="Okamura-Oho Y."/>
            <person name="Suzuki H."/>
            <person name="Kawai J."/>
            <person name="Hayashizaki Y."/>
        </authorList>
    </citation>
    <scope>NUCLEOTIDE SEQUENCE [LARGE SCALE MRNA]</scope>
    <source>
        <strain>C57BL/6J</strain>
        <tissue>Head</tissue>
    </source>
</reference>
<reference key="5">
    <citation type="journal article" date="2004" name="Genome Res.">
        <title>The status, quality, and expansion of the NIH full-length cDNA project: the Mammalian Gene Collection (MGC).</title>
        <authorList>
            <consortium name="The MGC Project Team"/>
        </authorList>
    </citation>
    <scope>NUCLEOTIDE SEQUENCE [LARGE SCALE MRNA]</scope>
</reference>
<reference key="6">
    <citation type="journal article" date="1988" name="Science">
        <title>MyoD1: a nuclear phosphoprotein requiring a Myc homology region to convert fibroblasts to myoblasts.</title>
        <authorList>
            <person name="Tapscott S.J."/>
            <person name="Davis R.L."/>
            <person name="Thayer M.J."/>
            <person name="Cheng P.-F."/>
            <person name="Weintraub H."/>
            <person name="Lassar A.B."/>
        </authorList>
    </citation>
    <scope>FUNCTION</scope>
</reference>
<reference key="7">
    <citation type="journal article" date="1997" name="EMBO J.">
        <title>p300 is required for MyoD-dependent cell cycle arrest and muscle-specific gene transcription.</title>
        <authorList>
            <person name="Puri P.L."/>
            <person name="Avantaggiati M.L."/>
            <person name="Balsano C."/>
            <person name="Sang N."/>
            <person name="Graessmann A."/>
            <person name="Giordano A."/>
            <person name="Levrero M."/>
        </authorList>
    </citation>
    <scope>ACETYLATION</scope>
</reference>
<reference key="8">
    <citation type="journal article" date="1997" name="Mol. Cell. Biol.">
        <title>The basic domain of myogenic basic helix-loop-helix (bHLH) proteins is the novel target for direct inhibition by another bHLH protein, Twist.</title>
        <authorList>
            <person name="Hamamori Y."/>
            <person name="Wu H.Y."/>
            <person name="Sartorelli V."/>
            <person name="Kedes L."/>
        </authorList>
    </citation>
    <scope>INHIBITION BY TWIST</scope>
</reference>
<reference key="9">
    <citation type="journal article" date="2001" name="Curr. Opin. Genet. Dev.">
        <title>Control of muscle development by dueling HATs and HDACs.</title>
        <authorList>
            <person name="McKinsey T.A."/>
            <person name="Zhang C.L."/>
            <person name="Olson E.N."/>
        </authorList>
    </citation>
    <scope>REVIEW ON ACETYLATION/DEACETYLATION</scope>
</reference>
<reference key="10">
    <citation type="journal article" date="2002" name="Oncogene">
        <title>Activation of MyoD-dependent transcription by cdk9/cyclin T2.</title>
        <authorList>
            <person name="Simone C."/>
            <person name="Stiegler P."/>
            <person name="Bagella L."/>
            <person name="Pucci B."/>
            <person name="Bellan C."/>
            <person name="De Falco G."/>
            <person name="De Luca A."/>
            <person name="Guanti G."/>
            <person name="Puri P.L."/>
            <person name="Giordano A."/>
        </authorList>
    </citation>
    <scope>INTERACTION WITH P-TEFB COMPLEX</scope>
</reference>
<reference key="11">
    <citation type="journal article" date="2003" name="Mol. Cell">
        <title>Sir2 regulates skeletal muscle differentiation as a potential sensor of the redox state.</title>
        <authorList>
            <person name="Fulco M."/>
            <person name="Schiltz R.L."/>
            <person name="Iezzi S."/>
            <person name="King M.T."/>
            <person name="Zhao P."/>
            <person name="Kashiwaya Y."/>
            <person name="Hoffman E."/>
            <person name="Veech R.L."/>
            <person name="Sartorelli V."/>
        </authorList>
    </citation>
    <scope>DEACETYLATION BY SIRT1</scope>
</reference>
<reference key="12">
    <citation type="journal article" date="2006" name="Dev. Cell">
        <title>The RNA helicases p68/p72 and the noncoding RNA SRA are coregulators of MyoD and skeletal muscle differentiation.</title>
        <authorList>
            <person name="Caretti G."/>
            <person name="Schiltz R.L."/>
            <person name="Dilworth F.J."/>
            <person name="Di Padova M."/>
            <person name="Zhao P."/>
            <person name="Ogryzko V."/>
            <person name="Fuller-Pace F.V."/>
            <person name="Hoffman E.P."/>
            <person name="Tapscott S.J."/>
            <person name="Sartorelli V."/>
        </authorList>
    </citation>
    <scope>INTERACTION WITH DDX5</scope>
</reference>
<reference key="13">
    <citation type="journal article" date="2006" name="J. Biol. Chem.">
        <title>Control of MyoD function during initiation of muscle differentiation by an autocrine signaling pathway activated by insulin-like growth factor-II.</title>
        <authorList>
            <person name="Wilson E.M."/>
            <person name="Rotwein P."/>
        </authorList>
    </citation>
    <scope>FUNCTION</scope>
    <scope>SUBCELLULAR LOCATION</scope>
</reference>
<reference key="14">
    <citation type="journal article" date="2009" name="J. Cell Sci.">
        <title>The small chromatin-binding protein p8 coordinates the association of anti-proliferative and pro-myogenic proteins at the myogenin promoter.</title>
        <authorList>
            <person name="Sambasivan R."/>
            <person name="Cheedipudi S."/>
            <person name="Pasupuleti N."/>
            <person name="Saleh A."/>
            <person name="Pavlath G.K."/>
            <person name="Dhawan J."/>
        </authorList>
    </citation>
    <scope>INTERACTION WITH NUPR1</scope>
</reference>
<reference key="15">
    <citation type="journal article" date="2010" name="J. Biol. Chem.">
        <title>Glucocorticoid-induced leucine zipper (GILZ) and long GILZ inhibit myogenic differentiation and mediate anti-myogenic effects of glucocorticoids.</title>
        <authorList>
            <person name="Bruscoli S."/>
            <person name="Donato V."/>
            <person name="Velardi E."/>
            <person name="Di Sante M."/>
            <person name="Migliorati G."/>
            <person name="Donato R."/>
            <person name="Riccardi C."/>
        </authorList>
    </citation>
    <scope>INTERACTION WITH TSC22D3</scope>
    <source>
        <strain>DBA/2J</strain>
        <tissue>Myoblast</tissue>
    </source>
</reference>
<reference key="16">
    <citation type="journal article" date="2011" name="J. Biol. Chem.">
        <title>Histone methyltransferase SETD3 regulates muscle differentiation.</title>
        <authorList>
            <person name="Eom G.H."/>
            <person name="Kim K.B."/>
            <person name="Kim J.H."/>
            <person name="Kim J.Y."/>
            <person name="Kim J.R."/>
            <person name="Kee H.J."/>
            <person name="Kim D.W."/>
            <person name="Choe N."/>
            <person name="Park H.J."/>
            <person name="Son H.J."/>
            <person name="Choi S.Y."/>
            <person name="Kook H."/>
            <person name="Seo S.B."/>
        </authorList>
    </citation>
    <scope>INTERACTION WITH SETD3</scope>
</reference>
<reference key="17">
    <citation type="journal article" date="2011" name="Skelet. Muscle">
        <title>Sequential association of myogenic regulatory factors and E proteins at muscle-specific genes.</title>
        <authorList>
            <person name="Londhe P."/>
            <person name="Davie J.K."/>
        </authorList>
    </citation>
    <scope>FUNCTION</scope>
    <scope>PROMOTER BINDING</scope>
</reference>
<reference key="18">
    <citation type="journal article" date="2012" name="EMBO J.">
        <title>Chd2 interacts with H3.3 to determine myogenic cell fate.</title>
        <authorList>
            <person name="Harada A."/>
            <person name="Okada S."/>
            <person name="Konno D."/>
            <person name="Odawara J."/>
            <person name="Yoshimi T."/>
            <person name="Yoshimura S."/>
            <person name="Kumamaru H."/>
            <person name="Saiwai H."/>
            <person name="Tsubota T."/>
            <person name="Kurumizaka H."/>
            <person name="Akashi K."/>
            <person name="Tachibana T."/>
            <person name="Imbalzano A.N."/>
            <person name="Ohkawa Y."/>
        </authorList>
    </citation>
    <scope>INTERACTION WITH CHD2</scope>
</reference>
<reference key="19">
    <citation type="journal article" date="1994" name="Cell">
        <title>Crystal structure of MyoD bHLH domain-DNA complex: perspectives on DNA recognition and implications for transcriptional activation.</title>
        <authorList>
            <person name="Ma P.C.M."/>
            <person name="Rould M.A."/>
            <person name="Weintraub H."/>
            <person name="Pabo C.O."/>
        </authorList>
    </citation>
    <scope>X-RAY CRYSTALLOGRAPHY (2.8 ANGSTROMS) OF 102-166</scope>
</reference>
<organism>
    <name type="scientific">Mus musculus</name>
    <name type="common">Mouse</name>
    <dbReference type="NCBI Taxonomy" id="10090"/>
    <lineage>
        <taxon>Eukaryota</taxon>
        <taxon>Metazoa</taxon>
        <taxon>Chordata</taxon>
        <taxon>Craniata</taxon>
        <taxon>Vertebrata</taxon>
        <taxon>Euteleostomi</taxon>
        <taxon>Mammalia</taxon>
        <taxon>Eutheria</taxon>
        <taxon>Euarchontoglires</taxon>
        <taxon>Glires</taxon>
        <taxon>Rodentia</taxon>
        <taxon>Myomorpha</taxon>
        <taxon>Muroidea</taxon>
        <taxon>Muridae</taxon>
        <taxon>Murinae</taxon>
        <taxon>Mus</taxon>
        <taxon>Mus</taxon>
    </lineage>
</organism>
<dbReference type="EMBL" id="M18779">
    <property type="protein sequence ID" value="AAA39799.1"/>
    <property type="molecule type" value="mRNA"/>
</dbReference>
<dbReference type="EMBL" id="X61655">
    <property type="protein sequence ID" value="CAA43836.1"/>
    <property type="molecule type" value="Genomic_DNA"/>
</dbReference>
<dbReference type="EMBL" id="M84918">
    <property type="protein sequence ID" value="AAA39798.1"/>
    <property type="molecule type" value="mRNA"/>
</dbReference>
<dbReference type="EMBL" id="AK076157">
    <property type="protein sequence ID" value="BAC36224.1"/>
    <property type="molecule type" value="mRNA"/>
</dbReference>
<dbReference type="EMBL" id="AK142859">
    <property type="protein sequence ID" value="BAE25213.1"/>
    <property type="molecule type" value="mRNA"/>
</dbReference>
<dbReference type="EMBL" id="BC103613">
    <property type="protein sequence ID" value="AAI03614.1"/>
    <property type="molecule type" value="mRNA"/>
</dbReference>
<dbReference type="EMBL" id="BC103618">
    <property type="protein sequence ID" value="AAI03619.1"/>
    <property type="molecule type" value="mRNA"/>
</dbReference>
<dbReference type="EMBL" id="BC103619">
    <property type="protein sequence ID" value="AAI03620.1"/>
    <property type="molecule type" value="mRNA"/>
</dbReference>
<dbReference type="CCDS" id="CCDS21277.1"/>
<dbReference type="PIR" id="A29636">
    <property type="entry name" value="A29636"/>
</dbReference>
<dbReference type="RefSeq" id="NP_034996.2">
    <property type="nucleotide sequence ID" value="NM_010866.2"/>
</dbReference>
<dbReference type="PDB" id="1MDY">
    <property type="method" value="X-ray"/>
    <property type="resolution" value="2.80 A"/>
    <property type="chains" value="A=102-166, B/C/D=105-166"/>
</dbReference>
<dbReference type="PDB" id="7WZ6">
    <property type="method" value="X-ray"/>
    <property type="resolution" value="2.05 A"/>
    <property type="chains" value="B=102-166"/>
</dbReference>
<dbReference type="PDBsum" id="1MDY"/>
<dbReference type="PDBsum" id="7WZ6"/>
<dbReference type="SMR" id="P10085"/>
<dbReference type="BioGRID" id="201673">
    <property type="interactions" value="32"/>
</dbReference>
<dbReference type="CORUM" id="P10085"/>
<dbReference type="DIP" id="DIP-37N"/>
<dbReference type="ELM" id="P10085"/>
<dbReference type="FunCoup" id="P10085">
    <property type="interactions" value="522"/>
</dbReference>
<dbReference type="IntAct" id="P10085">
    <property type="interactions" value="20"/>
</dbReference>
<dbReference type="MINT" id="P10085"/>
<dbReference type="STRING" id="10090.ENSMUSP00000072330"/>
<dbReference type="iPTMnet" id="P10085"/>
<dbReference type="PhosphoSitePlus" id="P10085"/>
<dbReference type="PaxDb" id="10090-ENSMUSP00000072330"/>
<dbReference type="ProteomicsDB" id="252631"/>
<dbReference type="Antibodypedia" id="12172">
    <property type="antibodies" value="1146 antibodies from 47 providers"/>
</dbReference>
<dbReference type="DNASU" id="17927"/>
<dbReference type="Ensembl" id="ENSMUST00000072514.3">
    <property type="protein sequence ID" value="ENSMUSP00000072330.2"/>
    <property type="gene ID" value="ENSMUSG00000009471.5"/>
</dbReference>
<dbReference type="GeneID" id="17927"/>
<dbReference type="KEGG" id="mmu:17927"/>
<dbReference type="UCSC" id="uc012fkv.1">
    <property type="organism name" value="mouse"/>
</dbReference>
<dbReference type="AGR" id="MGI:97275"/>
<dbReference type="CTD" id="4654"/>
<dbReference type="MGI" id="MGI:97275">
    <property type="gene designation" value="Myod1"/>
</dbReference>
<dbReference type="VEuPathDB" id="HostDB:ENSMUSG00000009471"/>
<dbReference type="eggNOG" id="KOG3960">
    <property type="taxonomic scope" value="Eukaryota"/>
</dbReference>
<dbReference type="GeneTree" id="ENSGT00950000182959"/>
<dbReference type="HOGENOM" id="CLU_066887_0_0_1"/>
<dbReference type="InParanoid" id="P10085"/>
<dbReference type="OMA" id="GPMEMTE"/>
<dbReference type="OrthoDB" id="10049614at2759"/>
<dbReference type="PhylomeDB" id="P10085"/>
<dbReference type="TreeFam" id="TF316344"/>
<dbReference type="Reactome" id="R-MMU-525793">
    <property type="pathway name" value="Myogenesis"/>
</dbReference>
<dbReference type="BioGRID-ORCS" id="17927">
    <property type="hits" value="2 hits in 76 CRISPR screens"/>
</dbReference>
<dbReference type="EvolutionaryTrace" id="P10085"/>
<dbReference type="PRO" id="PR:P10085"/>
<dbReference type="Proteomes" id="UP000000589">
    <property type="component" value="Chromosome 7"/>
</dbReference>
<dbReference type="RNAct" id="P10085">
    <property type="molecule type" value="protein"/>
</dbReference>
<dbReference type="Bgee" id="ENSMUSG00000009471">
    <property type="expression patterns" value="Expressed in mesenchyme from somatopleure and 96 other cell types or tissues"/>
</dbReference>
<dbReference type="GO" id="GO:0000785">
    <property type="term" value="C:chromatin"/>
    <property type="evidence" value="ECO:0000314"/>
    <property type="project" value="BHF-UCL"/>
</dbReference>
<dbReference type="GO" id="GO:0005737">
    <property type="term" value="C:cytoplasm"/>
    <property type="evidence" value="ECO:0000314"/>
    <property type="project" value="MGI"/>
</dbReference>
<dbReference type="GO" id="GO:0000791">
    <property type="term" value="C:euchromatin"/>
    <property type="evidence" value="ECO:0000314"/>
    <property type="project" value="ARUK-UCL"/>
</dbReference>
<dbReference type="GO" id="GO:0030016">
    <property type="term" value="C:myofibril"/>
    <property type="evidence" value="ECO:0000314"/>
    <property type="project" value="MGI"/>
</dbReference>
<dbReference type="GO" id="GO:0005654">
    <property type="term" value="C:nucleoplasm"/>
    <property type="evidence" value="ECO:0000304"/>
    <property type="project" value="Reactome"/>
</dbReference>
<dbReference type="GO" id="GO:0005634">
    <property type="term" value="C:nucleus"/>
    <property type="evidence" value="ECO:0000314"/>
    <property type="project" value="UniProtKB"/>
</dbReference>
<dbReference type="GO" id="GO:0005667">
    <property type="term" value="C:transcription regulator complex"/>
    <property type="evidence" value="ECO:0000314"/>
    <property type="project" value="UniProtKB"/>
</dbReference>
<dbReference type="GO" id="GO:0043425">
    <property type="term" value="F:bHLH transcription factor binding"/>
    <property type="evidence" value="ECO:0000353"/>
    <property type="project" value="UniProtKB"/>
</dbReference>
<dbReference type="GO" id="GO:0003682">
    <property type="term" value="F:chromatin binding"/>
    <property type="evidence" value="ECO:0000314"/>
    <property type="project" value="UniProtKB"/>
</dbReference>
<dbReference type="GO" id="GO:0031490">
    <property type="term" value="F:chromatin DNA binding"/>
    <property type="evidence" value="ECO:0000314"/>
    <property type="project" value="MGI"/>
</dbReference>
<dbReference type="GO" id="GO:0000987">
    <property type="term" value="F:cis-regulatory region sequence-specific DNA binding"/>
    <property type="evidence" value="ECO:0000314"/>
    <property type="project" value="MGI"/>
</dbReference>
<dbReference type="GO" id="GO:0001216">
    <property type="term" value="F:DNA-binding transcription activator activity"/>
    <property type="evidence" value="ECO:0000314"/>
    <property type="project" value="UniProtKB"/>
</dbReference>
<dbReference type="GO" id="GO:0001228">
    <property type="term" value="F:DNA-binding transcription activator activity, RNA polymerase II-specific"/>
    <property type="evidence" value="ECO:0000314"/>
    <property type="project" value="ARUK-UCL"/>
</dbReference>
<dbReference type="GO" id="GO:0003700">
    <property type="term" value="F:DNA-binding transcription factor activity"/>
    <property type="evidence" value="ECO:0000314"/>
    <property type="project" value="UniProtKB"/>
</dbReference>
<dbReference type="GO" id="GO:0000981">
    <property type="term" value="F:DNA-binding transcription factor activity, RNA polymerase II-specific"/>
    <property type="evidence" value="ECO:0000304"/>
    <property type="project" value="MGI"/>
</dbReference>
<dbReference type="GO" id="GO:0070888">
    <property type="term" value="F:E-box binding"/>
    <property type="evidence" value="ECO:0000314"/>
    <property type="project" value="UniProtKB"/>
</dbReference>
<dbReference type="GO" id="GO:0019899">
    <property type="term" value="F:enzyme binding"/>
    <property type="evidence" value="ECO:0000353"/>
    <property type="project" value="BHF-UCL"/>
</dbReference>
<dbReference type="GO" id="GO:0016922">
    <property type="term" value="F:nuclear receptor binding"/>
    <property type="evidence" value="ECO:0007669"/>
    <property type="project" value="Ensembl"/>
</dbReference>
<dbReference type="GO" id="GO:1990841">
    <property type="term" value="F:promoter-specific chromatin binding"/>
    <property type="evidence" value="ECO:0000314"/>
    <property type="project" value="UniProtKB"/>
</dbReference>
<dbReference type="GO" id="GO:0042803">
    <property type="term" value="F:protein homodimerization activity"/>
    <property type="evidence" value="ECO:0000353"/>
    <property type="project" value="ARUK-UCL"/>
</dbReference>
<dbReference type="GO" id="GO:0000978">
    <property type="term" value="F:RNA polymerase II cis-regulatory region sequence-specific DNA binding"/>
    <property type="evidence" value="ECO:0000314"/>
    <property type="project" value="NTNU_SB"/>
</dbReference>
<dbReference type="GO" id="GO:0061629">
    <property type="term" value="F:RNA polymerase II-specific DNA-binding transcription factor binding"/>
    <property type="evidence" value="ECO:0000353"/>
    <property type="project" value="ARUK-UCL"/>
</dbReference>
<dbReference type="GO" id="GO:0043565">
    <property type="term" value="F:sequence-specific DNA binding"/>
    <property type="evidence" value="ECO:0000314"/>
    <property type="project" value="MGI"/>
</dbReference>
<dbReference type="GO" id="GO:0031625">
    <property type="term" value="F:ubiquitin protein ligase binding"/>
    <property type="evidence" value="ECO:0000353"/>
    <property type="project" value="MGI"/>
</dbReference>
<dbReference type="GO" id="GO:0055007">
    <property type="term" value="P:cardiac muscle cell differentiation"/>
    <property type="evidence" value="ECO:0000303"/>
    <property type="project" value="UniProtKB"/>
</dbReference>
<dbReference type="GO" id="GO:0071392">
    <property type="term" value="P:cellular response to estradiol stimulus"/>
    <property type="evidence" value="ECO:0000314"/>
    <property type="project" value="UniProtKB"/>
</dbReference>
<dbReference type="GO" id="GO:0071385">
    <property type="term" value="P:cellular response to glucocorticoid stimulus"/>
    <property type="evidence" value="ECO:0000314"/>
    <property type="project" value="MGI"/>
</dbReference>
<dbReference type="GO" id="GO:0071453">
    <property type="term" value="P:cellular response to oxygen levels"/>
    <property type="evidence" value="ECO:0000314"/>
    <property type="project" value="MGI"/>
</dbReference>
<dbReference type="GO" id="GO:0009267">
    <property type="term" value="P:cellular response to starvation"/>
    <property type="evidence" value="ECO:0000314"/>
    <property type="project" value="MGI"/>
</dbReference>
<dbReference type="GO" id="GO:0071356">
    <property type="term" value="P:cellular response to tumor necrosis factor"/>
    <property type="evidence" value="ECO:0000314"/>
    <property type="project" value="MGI"/>
</dbReference>
<dbReference type="GO" id="GO:0042692">
    <property type="term" value="P:muscle cell differentiation"/>
    <property type="evidence" value="ECO:0000314"/>
    <property type="project" value="GO_Central"/>
</dbReference>
<dbReference type="GO" id="GO:0007517">
    <property type="term" value="P:muscle organ development"/>
    <property type="evidence" value="ECO:0000314"/>
    <property type="project" value="MGI"/>
</dbReference>
<dbReference type="GO" id="GO:0045445">
    <property type="term" value="P:myoblast differentiation"/>
    <property type="evidence" value="ECO:0000314"/>
    <property type="project" value="MGI"/>
</dbReference>
<dbReference type="GO" id="GO:0007518">
    <property type="term" value="P:myoblast fate determination"/>
    <property type="evidence" value="ECO:0000314"/>
    <property type="project" value="MGI"/>
</dbReference>
<dbReference type="GO" id="GO:0007520">
    <property type="term" value="P:myoblast fusion"/>
    <property type="evidence" value="ECO:0000315"/>
    <property type="project" value="MGI"/>
</dbReference>
<dbReference type="GO" id="GO:0014902">
    <property type="term" value="P:myotube differentiation"/>
    <property type="evidence" value="ECO:0000314"/>
    <property type="project" value="MGI"/>
</dbReference>
<dbReference type="GO" id="GO:0014908">
    <property type="term" value="P:myotube differentiation involved in skeletal muscle regeneration"/>
    <property type="evidence" value="ECO:0000315"/>
    <property type="project" value="MGI"/>
</dbReference>
<dbReference type="GO" id="GO:2000818">
    <property type="term" value="P:negative regulation of myoblast proliferation"/>
    <property type="evidence" value="ECO:0000315"/>
    <property type="project" value="MGI"/>
</dbReference>
<dbReference type="GO" id="GO:0045893">
    <property type="term" value="P:positive regulation of DNA-templated transcription"/>
    <property type="evidence" value="ECO:0000314"/>
    <property type="project" value="MGI"/>
</dbReference>
<dbReference type="GO" id="GO:0051149">
    <property type="term" value="P:positive regulation of muscle cell differentiation"/>
    <property type="evidence" value="ECO:0000314"/>
    <property type="project" value="UniProtKB"/>
</dbReference>
<dbReference type="GO" id="GO:1901741">
    <property type="term" value="P:positive regulation of myoblast fusion"/>
    <property type="evidence" value="ECO:0007669"/>
    <property type="project" value="Ensembl"/>
</dbReference>
<dbReference type="GO" id="GO:0043415">
    <property type="term" value="P:positive regulation of skeletal muscle tissue regeneration"/>
    <property type="evidence" value="ECO:0000315"/>
    <property type="project" value="MGI"/>
</dbReference>
<dbReference type="GO" id="GO:1905382">
    <property type="term" value="P:positive regulation of snRNA transcription by RNA polymerase II"/>
    <property type="evidence" value="ECO:0000315"/>
    <property type="project" value="UniProtKB"/>
</dbReference>
<dbReference type="GO" id="GO:0045944">
    <property type="term" value="P:positive regulation of transcription by RNA polymerase II"/>
    <property type="evidence" value="ECO:0000314"/>
    <property type="project" value="UniProtKB"/>
</dbReference>
<dbReference type="GO" id="GO:0000381">
    <property type="term" value="P:regulation of alternative mRNA splicing, via spliceosome"/>
    <property type="evidence" value="ECO:0000314"/>
    <property type="project" value="MGI"/>
</dbReference>
<dbReference type="GO" id="GO:0010468">
    <property type="term" value="P:regulation of gene expression"/>
    <property type="evidence" value="ECO:0000314"/>
    <property type="project" value="CACAO"/>
</dbReference>
<dbReference type="GO" id="GO:0006357">
    <property type="term" value="P:regulation of transcription by RNA polymerase II"/>
    <property type="evidence" value="ECO:0000314"/>
    <property type="project" value="MGI"/>
</dbReference>
<dbReference type="GO" id="GO:0035914">
    <property type="term" value="P:skeletal muscle cell differentiation"/>
    <property type="evidence" value="ECO:0000314"/>
    <property type="project" value="MGI"/>
</dbReference>
<dbReference type="GO" id="GO:0043503">
    <property type="term" value="P:skeletal muscle fiber adaptation"/>
    <property type="evidence" value="ECO:0000315"/>
    <property type="project" value="MGI"/>
</dbReference>
<dbReference type="GO" id="GO:0048741">
    <property type="term" value="P:skeletal muscle fiber development"/>
    <property type="evidence" value="ECO:0000315"/>
    <property type="project" value="MGI"/>
</dbReference>
<dbReference type="GO" id="GO:0007519">
    <property type="term" value="P:skeletal muscle tissue development"/>
    <property type="evidence" value="ECO:0000314"/>
    <property type="project" value="MGI"/>
</dbReference>
<dbReference type="GO" id="GO:0043403">
    <property type="term" value="P:skeletal muscle tissue regeneration"/>
    <property type="evidence" value="ECO:0000314"/>
    <property type="project" value="MGI"/>
</dbReference>
<dbReference type="GO" id="GO:0051146">
    <property type="term" value="P:striated muscle cell differentiation"/>
    <property type="evidence" value="ECO:0000315"/>
    <property type="project" value="MGI"/>
</dbReference>
<dbReference type="GO" id="GO:0006366">
    <property type="term" value="P:transcription by RNA polymerase II"/>
    <property type="evidence" value="ECO:0000316"/>
    <property type="project" value="MGI"/>
</dbReference>
<dbReference type="CDD" id="cd18936">
    <property type="entry name" value="bHLH_TS_MYOD1_Myf3"/>
    <property type="match status" value="1"/>
</dbReference>
<dbReference type="FunFam" id="4.10.280.10:FF:000005">
    <property type="entry name" value="Myogenic factor"/>
    <property type="match status" value="1"/>
</dbReference>
<dbReference type="Gene3D" id="4.10.280.10">
    <property type="entry name" value="Helix-loop-helix DNA-binding domain"/>
    <property type="match status" value="1"/>
</dbReference>
<dbReference type="InterPro" id="IPR011598">
    <property type="entry name" value="bHLH_dom"/>
</dbReference>
<dbReference type="InterPro" id="IPR036638">
    <property type="entry name" value="HLH_DNA-bd_sf"/>
</dbReference>
<dbReference type="InterPro" id="IPR022032">
    <property type="entry name" value="Myf5"/>
</dbReference>
<dbReference type="InterPro" id="IPR002546">
    <property type="entry name" value="MyoD_N"/>
</dbReference>
<dbReference type="InterPro" id="IPR039704">
    <property type="entry name" value="Myogenic_factor"/>
</dbReference>
<dbReference type="PANTHER" id="PTHR11534:SF2">
    <property type="entry name" value="MYOBLAST DETERMINATION PROTEIN 1"/>
    <property type="match status" value="1"/>
</dbReference>
<dbReference type="PANTHER" id="PTHR11534">
    <property type="entry name" value="MYOGENIC FACTOR"/>
    <property type="match status" value="1"/>
</dbReference>
<dbReference type="Pfam" id="PF01586">
    <property type="entry name" value="Basic"/>
    <property type="match status" value="1"/>
</dbReference>
<dbReference type="Pfam" id="PF00010">
    <property type="entry name" value="HLH"/>
    <property type="match status" value="1"/>
</dbReference>
<dbReference type="Pfam" id="PF12232">
    <property type="entry name" value="Myf5"/>
    <property type="match status" value="1"/>
</dbReference>
<dbReference type="SMART" id="SM00520">
    <property type="entry name" value="BASIC"/>
    <property type="match status" value="1"/>
</dbReference>
<dbReference type="SMART" id="SM00353">
    <property type="entry name" value="HLH"/>
    <property type="match status" value="1"/>
</dbReference>
<dbReference type="SUPFAM" id="SSF47459">
    <property type="entry name" value="HLH, helix-loop-helix DNA-binding domain"/>
    <property type="match status" value="1"/>
</dbReference>
<dbReference type="PROSITE" id="PS50888">
    <property type="entry name" value="BHLH"/>
    <property type="match status" value="1"/>
</dbReference>